<protein>
    <recommendedName>
        <fullName evidence="1">Translation initiation factor IF-1</fullName>
    </recommendedName>
</protein>
<comment type="function">
    <text evidence="1">One of the essential components for the initiation of protein synthesis. Stabilizes the binding of IF-2 and IF-3 on the 30S subunit to which N-formylmethionyl-tRNA(fMet) subsequently binds. Helps modulate mRNA selection, yielding the 30S pre-initiation complex (PIC). Upon addition of the 50S ribosomal subunit IF-1, IF-2 and IF-3 are released leaving the mature 70S translation initiation complex.</text>
</comment>
<comment type="subunit">
    <text evidence="1">Component of the 30S ribosomal translation pre-initiation complex which assembles on the 30S ribosome in the order IF-2 and IF-3, IF-1 and N-formylmethionyl-tRNA(fMet); mRNA recruitment can occur at any time during PIC assembly.</text>
</comment>
<comment type="subcellular location">
    <subcellularLocation>
        <location evidence="1">Cytoplasm</location>
    </subcellularLocation>
</comment>
<comment type="similarity">
    <text evidence="1">Belongs to the IF-1 family.</text>
</comment>
<accession>A7N1L7</accession>
<reference key="1">
    <citation type="submission" date="2007-08" db="EMBL/GenBank/DDBJ databases">
        <authorList>
            <consortium name="The Vibrio harveyi Genome Sequencing Project"/>
            <person name="Bassler B."/>
            <person name="Clifton S.W."/>
            <person name="Fulton L."/>
            <person name="Delehaunty K."/>
            <person name="Fronick C."/>
            <person name="Harrison M."/>
            <person name="Markivic C."/>
            <person name="Fulton R."/>
            <person name="Tin-Wollam A.-M."/>
            <person name="Shah N."/>
            <person name="Pepin K."/>
            <person name="Nash W."/>
            <person name="Thiruvilangam P."/>
            <person name="Bhonagiri V."/>
            <person name="Waters C."/>
            <person name="Tu K.C."/>
            <person name="Irgon J."/>
            <person name="Wilson R.K."/>
        </authorList>
    </citation>
    <scope>NUCLEOTIDE SEQUENCE [LARGE SCALE GENOMIC DNA]</scope>
    <source>
        <strain>ATCC BAA-1116 / BB120</strain>
    </source>
</reference>
<feature type="chain" id="PRO_0000338949" description="Translation initiation factor IF-1">
    <location>
        <begin position="1"/>
        <end position="72"/>
    </location>
</feature>
<feature type="domain" description="S1-like" evidence="1">
    <location>
        <begin position="1"/>
        <end position="72"/>
    </location>
</feature>
<sequence>MAKEDVIEMQGTVLDTLPNTMFRVELENGHVVTAHISGKMRKNYIRILTGDKVTVEMTPYDLSKGRIVFRAR</sequence>
<name>IF1_VIBC1</name>
<keyword id="KW-0963">Cytoplasm</keyword>
<keyword id="KW-0396">Initiation factor</keyword>
<keyword id="KW-0648">Protein biosynthesis</keyword>
<keyword id="KW-0694">RNA-binding</keyword>
<keyword id="KW-0699">rRNA-binding</keyword>
<proteinExistence type="inferred from homology"/>
<dbReference type="EMBL" id="CP000789">
    <property type="protein sequence ID" value="ABU70538.1"/>
    <property type="molecule type" value="Genomic_DNA"/>
</dbReference>
<dbReference type="RefSeq" id="WP_001040192.1">
    <property type="nucleotide sequence ID" value="NC_022269.1"/>
</dbReference>
<dbReference type="SMR" id="A7N1L7"/>
<dbReference type="GeneID" id="97540801"/>
<dbReference type="KEGG" id="vha:VIBHAR_01568"/>
<dbReference type="PATRIC" id="fig|338187.25.peg.1095"/>
<dbReference type="Proteomes" id="UP000008152">
    <property type="component" value="Chromosome I"/>
</dbReference>
<dbReference type="GO" id="GO:0005829">
    <property type="term" value="C:cytosol"/>
    <property type="evidence" value="ECO:0007669"/>
    <property type="project" value="TreeGrafter"/>
</dbReference>
<dbReference type="GO" id="GO:0043022">
    <property type="term" value="F:ribosome binding"/>
    <property type="evidence" value="ECO:0007669"/>
    <property type="project" value="UniProtKB-UniRule"/>
</dbReference>
<dbReference type="GO" id="GO:0019843">
    <property type="term" value="F:rRNA binding"/>
    <property type="evidence" value="ECO:0007669"/>
    <property type="project" value="UniProtKB-UniRule"/>
</dbReference>
<dbReference type="GO" id="GO:0003743">
    <property type="term" value="F:translation initiation factor activity"/>
    <property type="evidence" value="ECO:0007669"/>
    <property type="project" value="UniProtKB-UniRule"/>
</dbReference>
<dbReference type="CDD" id="cd04451">
    <property type="entry name" value="S1_IF1"/>
    <property type="match status" value="1"/>
</dbReference>
<dbReference type="FunFam" id="2.40.50.140:FF:000002">
    <property type="entry name" value="Translation initiation factor IF-1"/>
    <property type="match status" value="1"/>
</dbReference>
<dbReference type="Gene3D" id="2.40.50.140">
    <property type="entry name" value="Nucleic acid-binding proteins"/>
    <property type="match status" value="1"/>
</dbReference>
<dbReference type="HAMAP" id="MF_00075">
    <property type="entry name" value="IF_1"/>
    <property type="match status" value="1"/>
</dbReference>
<dbReference type="InterPro" id="IPR012340">
    <property type="entry name" value="NA-bd_OB-fold"/>
</dbReference>
<dbReference type="InterPro" id="IPR006196">
    <property type="entry name" value="RNA-binding_domain_S1_IF1"/>
</dbReference>
<dbReference type="InterPro" id="IPR003029">
    <property type="entry name" value="S1_domain"/>
</dbReference>
<dbReference type="InterPro" id="IPR004368">
    <property type="entry name" value="TIF_IF1"/>
</dbReference>
<dbReference type="NCBIfam" id="TIGR00008">
    <property type="entry name" value="infA"/>
    <property type="match status" value="1"/>
</dbReference>
<dbReference type="PANTHER" id="PTHR33370">
    <property type="entry name" value="TRANSLATION INITIATION FACTOR IF-1, CHLOROPLASTIC"/>
    <property type="match status" value="1"/>
</dbReference>
<dbReference type="PANTHER" id="PTHR33370:SF1">
    <property type="entry name" value="TRANSLATION INITIATION FACTOR IF-1, CHLOROPLASTIC"/>
    <property type="match status" value="1"/>
</dbReference>
<dbReference type="Pfam" id="PF01176">
    <property type="entry name" value="eIF-1a"/>
    <property type="match status" value="1"/>
</dbReference>
<dbReference type="SMART" id="SM00316">
    <property type="entry name" value="S1"/>
    <property type="match status" value="1"/>
</dbReference>
<dbReference type="SUPFAM" id="SSF50249">
    <property type="entry name" value="Nucleic acid-binding proteins"/>
    <property type="match status" value="1"/>
</dbReference>
<dbReference type="PROSITE" id="PS50832">
    <property type="entry name" value="S1_IF1_TYPE"/>
    <property type="match status" value="1"/>
</dbReference>
<organism>
    <name type="scientific">Vibrio campbellii (strain ATCC BAA-1116)</name>
    <dbReference type="NCBI Taxonomy" id="2902295"/>
    <lineage>
        <taxon>Bacteria</taxon>
        <taxon>Pseudomonadati</taxon>
        <taxon>Pseudomonadota</taxon>
        <taxon>Gammaproteobacteria</taxon>
        <taxon>Vibrionales</taxon>
        <taxon>Vibrionaceae</taxon>
        <taxon>Vibrio</taxon>
    </lineage>
</organism>
<evidence type="ECO:0000255" key="1">
    <source>
        <dbReference type="HAMAP-Rule" id="MF_00075"/>
    </source>
</evidence>
<gene>
    <name evidence="1" type="primary">infA</name>
    <name type="ordered locus">VIBHAR_01568</name>
</gene>